<gene>
    <name type="primary">rps1402</name>
    <name type="synonym">rps14b</name>
    <name type="ORF">SPBC18H10.13</name>
</gene>
<accession>P0CT57</accession>
<accession>O14150</accession>
<accession>Q96W57</accession>
<name>RS14B_SCHPO</name>
<evidence type="ECO:0000250" key="1">
    <source>
        <dbReference type="UniProtKB" id="P39516"/>
    </source>
</evidence>
<evidence type="ECO:0000256" key="2">
    <source>
        <dbReference type="SAM" id="MobiDB-lite"/>
    </source>
</evidence>
<evidence type="ECO:0000269" key="3">
    <source>
    </source>
</evidence>
<evidence type="ECO:0000305" key="4"/>
<protein>
    <recommendedName>
        <fullName evidence="4">Small ribosomal subunit protein uS11B</fullName>
    </recommendedName>
    <alternativeName>
        <fullName>40S ribosomal protein S14-B</fullName>
    </alternativeName>
</protein>
<reference key="1">
    <citation type="journal article" date="2002" name="Nature">
        <title>The genome sequence of Schizosaccharomyces pombe.</title>
        <authorList>
            <person name="Wood V."/>
            <person name="Gwilliam R."/>
            <person name="Rajandream M.A."/>
            <person name="Lyne M.H."/>
            <person name="Lyne R."/>
            <person name="Stewart A."/>
            <person name="Sgouros J.G."/>
            <person name="Peat N."/>
            <person name="Hayles J."/>
            <person name="Baker S.G."/>
            <person name="Basham D."/>
            <person name="Bowman S."/>
            <person name="Brooks K."/>
            <person name="Brown D."/>
            <person name="Brown S."/>
            <person name="Chillingworth T."/>
            <person name="Churcher C.M."/>
            <person name="Collins M."/>
            <person name="Connor R."/>
            <person name="Cronin A."/>
            <person name="Davis P."/>
            <person name="Feltwell T."/>
            <person name="Fraser A."/>
            <person name="Gentles S."/>
            <person name="Goble A."/>
            <person name="Hamlin N."/>
            <person name="Harris D.E."/>
            <person name="Hidalgo J."/>
            <person name="Hodgson G."/>
            <person name="Holroyd S."/>
            <person name="Hornsby T."/>
            <person name="Howarth S."/>
            <person name="Huckle E.J."/>
            <person name="Hunt S."/>
            <person name="Jagels K."/>
            <person name="James K.D."/>
            <person name="Jones L."/>
            <person name="Jones M."/>
            <person name="Leather S."/>
            <person name="McDonald S."/>
            <person name="McLean J."/>
            <person name="Mooney P."/>
            <person name="Moule S."/>
            <person name="Mungall K.L."/>
            <person name="Murphy L.D."/>
            <person name="Niblett D."/>
            <person name="Odell C."/>
            <person name="Oliver K."/>
            <person name="O'Neil S."/>
            <person name="Pearson D."/>
            <person name="Quail M.A."/>
            <person name="Rabbinowitsch E."/>
            <person name="Rutherford K.M."/>
            <person name="Rutter S."/>
            <person name="Saunders D."/>
            <person name="Seeger K."/>
            <person name="Sharp S."/>
            <person name="Skelton J."/>
            <person name="Simmonds M.N."/>
            <person name="Squares R."/>
            <person name="Squares S."/>
            <person name="Stevens K."/>
            <person name="Taylor K."/>
            <person name="Taylor R.G."/>
            <person name="Tivey A."/>
            <person name="Walsh S.V."/>
            <person name="Warren T."/>
            <person name="Whitehead S."/>
            <person name="Woodward J.R."/>
            <person name="Volckaert G."/>
            <person name="Aert R."/>
            <person name="Robben J."/>
            <person name="Grymonprez B."/>
            <person name="Weltjens I."/>
            <person name="Vanstreels E."/>
            <person name="Rieger M."/>
            <person name="Schaefer M."/>
            <person name="Mueller-Auer S."/>
            <person name="Gabel C."/>
            <person name="Fuchs M."/>
            <person name="Duesterhoeft A."/>
            <person name="Fritzc C."/>
            <person name="Holzer E."/>
            <person name="Moestl D."/>
            <person name="Hilbert H."/>
            <person name="Borzym K."/>
            <person name="Langer I."/>
            <person name="Beck A."/>
            <person name="Lehrach H."/>
            <person name="Reinhardt R."/>
            <person name="Pohl T.M."/>
            <person name="Eger P."/>
            <person name="Zimmermann W."/>
            <person name="Wedler H."/>
            <person name="Wambutt R."/>
            <person name="Purnelle B."/>
            <person name="Goffeau A."/>
            <person name="Cadieu E."/>
            <person name="Dreano S."/>
            <person name="Gloux S."/>
            <person name="Lelaure V."/>
            <person name="Mottier S."/>
            <person name="Galibert F."/>
            <person name="Aves S.J."/>
            <person name="Xiang Z."/>
            <person name="Hunt C."/>
            <person name="Moore K."/>
            <person name="Hurst S.M."/>
            <person name="Lucas M."/>
            <person name="Rochet M."/>
            <person name="Gaillardin C."/>
            <person name="Tallada V.A."/>
            <person name="Garzon A."/>
            <person name="Thode G."/>
            <person name="Daga R.R."/>
            <person name="Cruzado L."/>
            <person name="Jimenez J."/>
            <person name="Sanchez M."/>
            <person name="del Rey F."/>
            <person name="Benito J."/>
            <person name="Dominguez A."/>
            <person name="Revuelta J.L."/>
            <person name="Moreno S."/>
            <person name="Armstrong J."/>
            <person name="Forsburg S.L."/>
            <person name="Cerutti L."/>
            <person name="Lowe T."/>
            <person name="McCombie W.R."/>
            <person name="Paulsen I."/>
            <person name="Potashkin J."/>
            <person name="Shpakovski G.V."/>
            <person name="Ussery D."/>
            <person name="Barrell B.G."/>
            <person name="Nurse P."/>
        </authorList>
    </citation>
    <scope>NUCLEOTIDE SEQUENCE [LARGE SCALE GENOMIC DNA]</scope>
    <source>
        <strain>972 / ATCC 24843</strain>
    </source>
</reference>
<reference key="2">
    <citation type="journal article" date="2006" name="Nat. Biotechnol.">
        <title>ORFeome cloning and global analysis of protein localization in the fission yeast Schizosaccharomyces pombe.</title>
        <authorList>
            <person name="Matsuyama A."/>
            <person name="Arai R."/>
            <person name="Yashiroda Y."/>
            <person name="Shirai A."/>
            <person name="Kamata A."/>
            <person name="Sekido S."/>
            <person name="Kobayashi Y."/>
            <person name="Hashimoto A."/>
            <person name="Hamamoto M."/>
            <person name="Hiraoka Y."/>
            <person name="Horinouchi S."/>
            <person name="Yoshida M."/>
        </authorList>
    </citation>
    <scope>SUBCELLULAR LOCATION [LARGE SCALE ANALYSIS]</scope>
</reference>
<comment type="function">
    <text evidence="1">Component of the ribosome, a large ribonucleoprotein complex responsible for the synthesis of proteins in the cell. The small ribosomal subunit (SSU) binds messenger RNAs (mRNAs) and translates the encoded message by selecting cognate aminoacyl-transfer RNA (tRNA) molecules. The large subunit (LSU) contains the ribosomal catalytic site termed the peptidyl transferase center (PTC), which catalyzes the formation of peptide bonds, thereby polymerizing the amino acids delivered by tRNAs into a polypeptide chain. The nascent polypeptides leave the ribosome through a tunnel in the LSU and interact with protein factors that function in enzymatic processing, targeting, and the membrane insertion of nascent chains at the exit of the ribosomal tunnel. uS11 is involved in nucleolar processing of pre-18S ribosomal RNA and ribosome assembly.</text>
</comment>
<comment type="subunit">
    <text evidence="1">Component of the small ribosomal subunit (SSU). Mature yeast ribosomes consist of a small (40S) and a large (60S) subunit. The 40S small subunit contains 1 molecule of ribosomal RNA (18S rRNA) and at least 33 different proteins. The large 60S subunit contains 3 rRNA molecules (25S, 5.8S and 5S rRNA) and at least 46 different proteins. uS11 interacts with eS1 forming part of the mRNA exit tunnel. uS11 interacts with snoRNA U3. uS11 interacts with MPP10. Component of the ribosomal small subunit (SSU) processome composed of at least 40 protein subunits and snoRNA U3.</text>
</comment>
<comment type="subcellular location">
    <subcellularLocation>
        <location evidence="1">Cytoplasm</location>
    </subcellularLocation>
    <subcellularLocation>
        <location evidence="3">Nucleus</location>
    </subcellularLocation>
    <subcellularLocation>
        <location evidence="3">Nucleus</location>
        <location evidence="3">Nucleolus</location>
    </subcellularLocation>
</comment>
<comment type="miscellaneous">
    <text>There are 2 genes for uS11 in S.pombe.</text>
</comment>
<comment type="similarity">
    <text evidence="4">Belongs to the universal ribosomal protein uS11 family.</text>
</comment>
<sequence length="139" mass="14699">MATNVGPQIRSGELVFGVAHIFASFNDTFVHITDLTGKETIVRVTGGMKVKTDRDESSPYAAMLAAQDAAAKCKEVGITALHIKIRATGGTATKTPGPGAQAALRALARAGMRIGRIEDVTPIPTDSTRRKGGRRGRRL</sequence>
<feature type="chain" id="PRO_0000433423" description="Small ribosomal subunit protein uS11B">
    <location>
        <begin position="1"/>
        <end position="139"/>
    </location>
</feature>
<feature type="region of interest" description="Disordered" evidence="2">
    <location>
        <begin position="119"/>
        <end position="139"/>
    </location>
</feature>
<feature type="compositionally biased region" description="Basic residues" evidence="2">
    <location>
        <begin position="130"/>
        <end position="139"/>
    </location>
</feature>
<keyword id="KW-0002">3D-structure</keyword>
<keyword id="KW-0963">Cytoplasm</keyword>
<keyword id="KW-0539">Nucleus</keyword>
<keyword id="KW-1185">Reference proteome</keyword>
<keyword id="KW-0687">Ribonucleoprotein</keyword>
<keyword id="KW-0689">Ribosomal protein</keyword>
<organism>
    <name type="scientific">Schizosaccharomyces pombe (strain 972 / ATCC 24843)</name>
    <name type="common">Fission yeast</name>
    <dbReference type="NCBI Taxonomy" id="284812"/>
    <lineage>
        <taxon>Eukaryota</taxon>
        <taxon>Fungi</taxon>
        <taxon>Dikarya</taxon>
        <taxon>Ascomycota</taxon>
        <taxon>Taphrinomycotina</taxon>
        <taxon>Schizosaccharomycetes</taxon>
        <taxon>Schizosaccharomycetales</taxon>
        <taxon>Schizosaccharomycetaceae</taxon>
        <taxon>Schizosaccharomyces</taxon>
    </lineage>
</organism>
<proteinExistence type="evidence at protein level"/>
<dbReference type="EMBL" id="CU329671">
    <property type="protein sequence ID" value="CAA18410.1"/>
    <property type="molecule type" value="Genomic_DNA"/>
</dbReference>
<dbReference type="PIR" id="T38751">
    <property type="entry name" value="T38751"/>
</dbReference>
<dbReference type="RefSeq" id="NP_595737.1">
    <property type="nucleotide sequence ID" value="NM_001021635.2"/>
</dbReference>
<dbReference type="PDB" id="9AXT">
    <property type="method" value="EM"/>
    <property type="resolution" value="2.40 A"/>
    <property type="chains" value="AR=1-139"/>
</dbReference>
<dbReference type="PDB" id="9AXV">
    <property type="method" value="EM"/>
    <property type="resolution" value="2.40 A"/>
    <property type="chains" value="AR=1-139"/>
</dbReference>
<dbReference type="PDBsum" id="9AXT"/>
<dbReference type="PDBsum" id="9AXV"/>
<dbReference type="EMDB" id="EMD-43972"/>
<dbReference type="EMDB" id="EMD-43976"/>
<dbReference type="SMR" id="P0CT57"/>
<dbReference type="FunCoup" id="P0CT57">
    <property type="interactions" value="425"/>
</dbReference>
<dbReference type="STRING" id="284812.P0CT57"/>
<dbReference type="iPTMnet" id="P0CT57"/>
<dbReference type="EnsemblFungi" id="SPAC3H5.05c.1">
    <property type="protein sequence ID" value="SPAC3H5.05c.1:pep"/>
    <property type="gene ID" value="SPAC3H5.05c"/>
</dbReference>
<dbReference type="EnsemblFungi" id="SPBC18H10.13.1">
    <property type="protein sequence ID" value="SPBC18H10.13.1:pep"/>
    <property type="gene ID" value="SPBC18H10.13"/>
</dbReference>
<dbReference type="GeneID" id="5802781"/>
<dbReference type="KEGG" id="spo:2540817"/>
<dbReference type="KEGG" id="spo:5802781"/>
<dbReference type="PomBase" id="SPBC18H10.13">
    <property type="gene designation" value="rps1402"/>
</dbReference>
<dbReference type="VEuPathDB" id="FungiDB:SPAC3H5.05c"/>
<dbReference type="VEuPathDB" id="FungiDB:SPBC18H10.13"/>
<dbReference type="InParanoid" id="P0CT57"/>
<dbReference type="OMA" id="IYASHND"/>
<dbReference type="PhylomeDB" id="P0CT57"/>
<dbReference type="Reactome" id="R-SPO-156827">
    <property type="pathway name" value="L13a-mediated translational silencing of Ceruloplasmin expression"/>
</dbReference>
<dbReference type="Reactome" id="R-SPO-1799339">
    <property type="pathway name" value="SRP-dependent cotranslational protein targeting to membrane"/>
</dbReference>
<dbReference type="Reactome" id="R-SPO-6791226">
    <property type="pathway name" value="Major pathway of rRNA processing in the nucleolus and cytosol"/>
</dbReference>
<dbReference type="Reactome" id="R-SPO-72649">
    <property type="pathway name" value="Translation initiation complex formation"/>
</dbReference>
<dbReference type="Reactome" id="R-SPO-72689">
    <property type="pathway name" value="Formation of a pool of free 40S subunits"/>
</dbReference>
<dbReference type="Reactome" id="R-SPO-72695">
    <property type="pathway name" value="Formation of the ternary complex, and subsequently, the 43S complex"/>
</dbReference>
<dbReference type="Reactome" id="R-SPO-72702">
    <property type="pathway name" value="Ribosomal scanning and start codon recognition"/>
</dbReference>
<dbReference type="Reactome" id="R-SPO-72706">
    <property type="pathway name" value="GTP hydrolysis and joining of the 60S ribosomal subunit"/>
</dbReference>
<dbReference type="Reactome" id="R-SPO-975956">
    <property type="pathway name" value="Nonsense Mediated Decay (NMD) independent of the Exon Junction Complex (EJC)"/>
</dbReference>
<dbReference type="Reactome" id="R-SPO-975957">
    <property type="pathway name" value="Nonsense Mediated Decay (NMD) enhanced by the Exon Junction Complex (EJC)"/>
</dbReference>
<dbReference type="PRO" id="PR:P0CT57"/>
<dbReference type="Proteomes" id="UP000002485">
    <property type="component" value="Chromosome II"/>
</dbReference>
<dbReference type="GO" id="GO:0010494">
    <property type="term" value="C:cytoplasmic stress granule"/>
    <property type="evidence" value="ECO:0000269"/>
    <property type="project" value="PomBase"/>
</dbReference>
<dbReference type="GO" id="GO:0022627">
    <property type="term" value="C:cytosolic small ribosomal subunit"/>
    <property type="evidence" value="ECO:0000269"/>
    <property type="project" value="PomBase"/>
</dbReference>
<dbReference type="GO" id="GO:0005730">
    <property type="term" value="C:nucleolus"/>
    <property type="evidence" value="ECO:0007005"/>
    <property type="project" value="PomBase"/>
</dbReference>
<dbReference type="GO" id="GO:0005634">
    <property type="term" value="C:nucleus"/>
    <property type="evidence" value="ECO:0007005"/>
    <property type="project" value="PomBase"/>
</dbReference>
<dbReference type="GO" id="GO:0003735">
    <property type="term" value="F:structural constituent of ribosome"/>
    <property type="evidence" value="ECO:0000318"/>
    <property type="project" value="GO_Central"/>
</dbReference>
<dbReference type="GO" id="GO:0002181">
    <property type="term" value="P:cytoplasmic translation"/>
    <property type="evidence" value="ECO:0000266"/>
    <property type="project" value="PomBase"/>
</dbReference>
<dbReference type="GO" id="GO:0000028">
    <property type="term" value="P:ribosomal small subunit assembly"/>
    <property type="evidence" value="ECO:0000318"/>
    <property type="project" value="GO_Central"/>
</dbReference>
<dbReference type="GO" id="GO:0006412">
    <property type="term" value="P:translation"/>
    <property type="evidence" value="ECO:0000318"/>
    <property type="project" value="GO_Central"/>
</dbReference>
<dbReference type="FunFam" id="3.30.420.80:FF:000002">
    <property type="entry name" value="40S ribosomal protein S14"/>
    <property type="match status" value="1"/>
</dbReference>
<dbReference type="Gene3D" id="3.30.420.80">
    <property type="entry name" value="Ribosomal protein S11"/>
    <property type="match status" value="1"/>
</dbReference>
<dbReference type="HAMAP" id="MF_01310">
    <property type="entry name" value="Ribosomal_uS11"/>
    <property type="match status" value="1"/>
</dbReference>
<dbReference type="InterPro" id="IPR001971">
    <property type="entry name" value="Ribosomal_uS11"/>
</dbReference>
<dbReference type="InterPro" id="IPR018102">
    <property type="entry name" value="Ribosomal_uS11_CS"/>
</dbReference>
<dbReference type="InterPro" id="IPR036967">
    <property type="entry name" value="Ribosomal_uS11_sf"/>
</dbReference>
<dbReference type="NCBIfam" id="NF007176">
    <property type="entry name" value="PRK09607.1"/>
    <property type="match status" value="1"/>
</dbReference>
<dbReference type="PANTHER" id="PTHR11759">
    <property type="entry name" value="40S RIBOSOMAL PROTEIN S14/30S RIBOSOMAL PROTEIN S11"/>
    <property type="match status" value="1"/>
</dbReference>
<dbReference type="Pfam" id="PF00411">
    <property type="entry name" value="Ribosomal_S11"/>
    <property type="match status" value="1"/>
</dbReference>
<dbReference type="PIRSF" id="PIRSF002131">
    <property type="entry name" value="Ribosomal_S11"/>
    <property type="match status" value="1"/>
</dbReference>
<dbReference type="SUPFAM" id="SSF53137">
    <property type="entry name" value="Translational machinery components"/>
    <property type="match status" value="1"/>
</dbReference>
<dbReference type="PROSITE" id="PS00054">
    <property type="entry name" value="RIBOSOMAL_S11"/>
    <property type="match status" value="1"/>
</dbReference>